<protein>
    <recommendedName>
        <fullName evidence="1">Urease accessory protein UreD 1</fullName>
    </recommendedName>
</protein>
<comment type="function">
    <text evidence="1">Required for maturation of urease via the functional incorporation of the urease nickel metallocenter.</text>
</comment>
<comment type="subunit">
    <text evidence="1">UreD, UreF and UreG form a complex that acts as a GTP-hydrolysis-dependent molecular chaperone, activating the urease apoprotein by helping to assemble the nickel containing metallocenter of UreC. The UreE protein probably delivers the nickel.</text>
</comment>
<comment type="subcellular location">
    <subcellularLocation>
        <location evidence="1">Cytoplasm</location>
    </subcellularLocation>
</comment>
<comment type="similarity">
    <text evidence="1">Belongs to the UreD family.</text>
</comment>
<evidence type="ECO:0000255" key="1">
    <source>
        <dbReference type="HAMAP-Rule" id="MF_01384"/>
    </source>
</evidence>
<evidence type="ECO:0000256" key="2">
    <source>
        <dbReference type="SAM" id="MobiDB-lite"/>
    </source>
</evidence>
<accession>B1LZY1</accession>
<feature type="chain" id="PRO_0000346578" description="Urease accessory protein UreD 1">
    <location>
        <begin position="1"/>
        <end position="288"/>
    </location>
</feature>
<feature type="region of interest" description="Disordered" evidence="2">
    <location>
        <begin position="1"/>
        <end position="35"/>
    </location>
</feature>
<feature type="compositionally biased region" description="Pro residues" evidence="2">
    <location>
        <begin position="1"/>
        <end position="10"/>
    </location>
</feature>
<dbReference type="EMBL" id="CP001001">
    <property type="protein sequence ID" value="ACB24464.1"/>
    <property type="molecule type" value="Genomic_DNA"/>
</dbReference>
<dbReference type="RefSeq" id="WP_012319437.1">
    <property type="nucleotide sequence ID" value="NC_010505.1"/>
</dbReference>
<dbReference type="SMR" id="B1LZY1"/>
<dbReference type="STRING" id="426355.Mrad2831_2469"/>
<dbReference type="GeneID" id="6138511"/>
<dbReference type="KEGG" id="mrd:Mrad2831_2469"/>
<dbReference type="PATRIC" id="fig|426355.14.peg.2547"/>
<dbReference type="eggNOG" id="COG0829">
    <property type="taxonomic scope" value="Bacteria"/>
</dbReference>
<dbReference type="HOGENOM" id="CLU_056339_2_0_5"/>
<dbReference type="OrthoDB" id="9798842at2"/>
<dbReference type="Proteomes" id="UP000006589">
    <property type="component" value="Chromosome"/>
</dbReference>
<dbReference type="GO" id="GO:0005737">
    <property type="term" value="C:cytoplasm"/>
    <property type="evidence" value="ECO:0007669"/>
    <property type="project" value="UniProtKB-SubCell"/>
</dbReference>
<dbReference type="GO" id="GO:0016151">
    <property type="term" value="F:nickel cation binding"/>
    <property type="evidence" value="ECO:0007669"/>
    <property type="project" value="UniProtKB-UniRule"/>
</dbReference>
<dbReference type="HAMAP" id="MF_01384">
    <property type="entry name" value="UreD"/>
    <property type="match status" value="1"/>
</dbReference>
<dbReference type="InterPro" id="IPR002669">
    <property type="entry name" value="UreD"/>
</dbReference>
<dbReference type="PANTHER" id="PTHR33643">
    <property type="entry name" value="UREASE ACCESSORY PROTEIN D"/>
    <property type="match status" value="1"/>
</dbReference>
<dbReference type="PANTHER" id="PTHR33643:SF1">
    <property type="entry name" value="UREASE ACCESSORY PROTEIN D"/>
    <property type="match status" value="1"/>
</dbReference>
<dbReference type="Pfam" id="PF01774">
    <property type="entry name" value="UreD"/>
    <property type="match status" value="1"/>
</dbReference>
<name>URED1_METRJ</name>
<gene>
    <name evidence="1" type="primary">ureD1</name>
    <name type="ordered locus">Mrad2831_2469</name>
</gene>
<organism>
    <name type="scientific">Methylobacterium radiotolerans (strain ATCC 27329 / DSM 1819 / JCM 2831 / NBRC 15690 / NCIMB 10815 / 0-1)</name>
    <dbReference type="NCBI Taxonomy" id="426355"/>
    <lineage>
        <taxon>Bacteria</taxon>
        <taxon>Pseudomonadati</taxon>
        <taxon>Pseudomonadota</taxon>
        <taxon>Alphaproteobacteria</taxon>
        <taxon>Hyphomicrobiales</taxon>
        <taxon>Methylobacteriaceae</taxon>
        <taxon>Methylobacterium</taxon>
    </lineage>
</organism>
<sequence>MHGPLAPAPSPERLGAAPARQRSDGRIRLRVGPARPGGGTRILDLAEAGPSRLRFPRGTCALEAVLVNTAGGVACGDSFAIDLALEPGADLVLTTTAAEKIYRSDGPVSRIANTLTLGEGAGLAWLPQETILFDRARVRRRFEADLADGAALIAAEVVAFGRAARGERIVDGLFADSWRIRRGGRLAYADSVLLEGPISDHLARPAIGGGARACATILDVSPGAEARLEEARARLAEAASPGTTAAASAWNGHLAVRALGDAVGPLRGLVARFLAGYRALPMPRVWQS</sequence>
<proteinExistence type="inferred from homology"/>
<keyword id="KW-0143">Chaperone</keyword>
<keyword id="KW-0963">Cytoplasm</keyword>
<keyword id="KW-0996">Nickel insertion</keyword>
<reference key="1">
    <citation type="submission" date="2008-03" db="EMBL/GenBank/DDBJ databases">
        <title>Complete sequence of chromosome of Methylobacterium radiotolerans JCM 2831.</title>
        <authorList>
            <consortium name="US DOE Joint Genome Institute"/>
            <person name="Copeland A."/>
            <person name="Lucas S."/>
            <person name="Lapidus A."/>
            <person name="Glavina del Rio T."/>
            <person name="Dalin E."/>
            <person name="Tice H."/>
            <person name="Bruce D."/>
            <person name="Goodwin L."/>
            <person name="Pitluck S."/>
            <person name="Kiss H."/>
            <person name="Brettin T."/>
            <person name="Detter J.C."/>
            <person name="Han C."/>
            <person name="Kuske C.R."/>
            <person name="Schmutz J."/>
            <person name="Larimer F."/>
            <person name="Land M."/>
            <person name="Hauser L."/>
            <person name="Kyrpides N."/>
            <person name="Mikhailova N."/>
            <person name="Marx C.J."/>
            <person name="Richardson P."/>
        </authorList>
    </citation>
    <scope>NUCLEOTIDE SEQUENCE [LARGE SCALE GENOMIC DNA]</scope>
    <source>
        <strain>ATCC 27329 / DSM 1819 / JCM 2831 / NBRC 15690 / NCIMB 10815 / 0-1</strain>
    </source>
</reference>